<keyword id="KW-0007">Acetylation</keyword>
<keyword id="KW-0113">Calvin cycle</keyword>
<keyword id="KW-0120">Carbon dioxide fixation</keyword>
<keyword id="KW-0150">Chloroplast</keyword>
<keyword id="KW-0456">Lyase</keyword>
<keyword id="KW-0488">Methylation</keyword>
<keyword id="KW-0503">Monooxygenase</keyword>
<keyword id="KW-0560">Oxidoreductase</keyword>
<keyword id="KW-0601">Photorespiration</keyword>
<keyword id="KW-0602">Photosynthesis</keyword>
<keyword id="KW-0934">Plastid</keyword>
<sequence>MSPQTETKASVGFKAGVKDYKLTYYTPDYETKDTDILAAFRVSPQPGVPPEEAGAAVA</sequence>
<gene>
    <name type="primary">rbcL</name>
</gene>
<evidence type="ECO:0000250" key="1"/>
<evidence type="ECO:0000305" key="2"/>
<comment type="function">
    <text evidence="1">RuBisCO catalyzes two reactions: the carboxylation of D-ribulose 1,5-bisphosphate, the primary event in carbon dioxide fixation, as well as the oxidative fragmentation of the pentose substrate in the photorespiration process. Both reactions occur simultaneously and in competition at the same active site (By similarity).</text>
</comment>
<comment type="catalytic activity">
    <reaction>
        <text>2 (2R)-3-phosphoglycerate + 2 H(+) = D-ribulose 1,5-bisphosphate + CO2 + H2O</text>
        <dbReference type="Rhea" id="RHEA:23124"/>
        <dbReference type="ChEBI" id="CHEBI:15377"/>
        <dbReference type="ChEBI" id="CHEBI:15378"/>
        <dbReference type="ChEBI" id="CHEBI:16526"/>
        <dbReference type="ChEBI" id="CHEBI:57870"/>
        <dbReference type="ChEBI" id="CHEBI:58272"/>
        <dbReference type="EC" id="4.1.1.39"/>
    </reaction>
</comment>
<comment type="catalytic activity">
    <reaction>
        <text>D-ribulose 1,5-bisphosphate + O2 = 2-phosphoglycolate + (2R)-3-phosphoglycerate + 2 H(+)</text>
        <dbReference type="Rhea" id="RHEA:36631"/>
        <dbReference type="ChEBI" id="CHEBI:15378"/>
        <dbReference type="ChEBI" id="CHEBI:15379"/>
        <dbReference type="ChEBI" id="CHEBI:57870"/>
        <dbReference type="ChEBI" id="CHEBI:58033"/>
        <dbReference type="ChEBI" id="CHEBI:58272"/>
    </reaction>
</comment>
<comment type="subunit">
    <text evidence="1">Heterohexadecamer of 8 large chains and 8 small chains.</text>
</comment>
<comment type="subcellular location">
    <subcellularLocation>
        <location>Plastid</location>
        <location>Chloroplast</location>
    </subcellularLocation>
</comment>
<comment type="miscellaneous">
    <text evidence="1">The basic functional RuBisCO is composed of a large chain homodimer in a 'head-to-tail' conformation. In form I RuBisCO this homodimer is arranged in a barrel-like tetramer with the small subunits forming a tetrameric 'cap' on each end of the 'barrel' (By similarity).</text>
</comment>
<comment type="similarity">
    <text evidence="2">Belongs to the RuBisCO large chain family. Type I subfamily.</text>
</comment>
<proteinExistence type="inferred from homology"/>
<reference key="1">
    <citation type="journal article" date="1994" name="Mol. Phylogenet. Evol.">
        <title>Molecular phylogeny of families related to Celastrales based on rbcL 5' flanking sequences.</title>
        <authorList>
            <person name="Savolainen V."/>
            <person name="Manen J.F."/>
            <person name="Douzery E.J.P."/>
            <person name="Spichiger R."/>
        </authorList>
    </citation>
    <scope>NUCLEOTIDE SEQUENCE [GENOMIC DNA]</scope>
    <source>
        <strain>Sample WSY2</strain>
    </source>
</reference>
<name>RBL_WEISI</name>
<feature type="propeptide" id="PRO_0000031445" evidence="1">
    <location>
        <begin position="1"/>
        <end position="2"/>
    </location>
</feature>
<feature type="chain" id="PRO_0000031446" description="Ribulose bisphosphate carboxylase large chain">
    <location>
        <begin position="3"/>
        <end position="58" status="greater than"/>
    </location>
</feature>
<feature type="modified residue" description="N-acetylproline" evidence="1">
    <location>
        <position position="3"/>
    </location>
</feature>
<feature type="modified residue" description="N6,N6,N6-trimethyllysine" evidence="1">
    <location>
        <position position="14"/>
    </location>
</feature>
<feature type="non-terminal residue">
    <location>
        <position position="58"/>
    </location>
</feature>
<geneLocation type="chloroplast"/>
<protein>
    <recommendedName>
        <fullName>Ribulose bisphosphate carboxylase large chain</fullName>
        <shortName>RuBisCO large subunit</shortName>
        <ecNumber>4.1.1.39</ecNumber>
    </recommendedName>
</protein>
<dbReference type="EC" id="4.1.1.39"/>
<dbReference type="EMBL" id="X69756">
    <property type="protein sequence ID" value="CAA49411.1"/>
    <property type="molecule type" value="Genomic_DNA"/>
</dbReference>
<dbReference type="PIR" id="S31541">
    <property type="entry name" value="S31541"/>
</dbReference>
<dbReference type="SMR" id="P31203"/>
<dbReference type="GO" id="GO:0009507">
    <property type="term" value="C:chloroplast"/>
    <property type="evidence" value="ECO:0007669"/>
    <property type="project" value="UniProtKB-SubCell"/>
</dbReference>
<dbReference type="GO" id="GO:0004497">
    <property type="term" value="F:monooxygenase activity"/>
    <property type="evidence" value="ECO:0007669"/>
    <property type="project" value="UniProtKB-KW"/>
</dbReference>
<dbReference type="GO" id="GO:0016984">
    <property type="term" value="F:ribulose-bisphosphate carboxylase activity"/>
    <property type="evidence" value="ECO:0007669"/>
    <property type="project" value="UniProtKB-EC"/>
</dbReference>
<dbReference type="GO" id="GO:0009853">
    <property type="term" value="P:photorespiration"/>
    <property type="evidence" value="ECO:0007669"/>
    <property type="project" value="UniProtKB-KW"/>
</dbReference>
<dbReference type="GO" id="GO:0019253">
    <property type="term" value="P:reductive pentose-phosphate cycle"/>
    <property type="evidence" value="ECO:0007669"/>
    <property type="project" value="UniProtKB-KW"/>
</dbReference>
<dbReference type="Gene3D" id="3.30.70.150">
    <property type="entry name" value="RuBisCO large subunit, N-terminal domain"/>
    <property type="match status" value="1"/>
</dbReference>
<dbReference type="InterPro" id="IPR033966">
    <property type="entry name" value="RuBisCO"/>
</dbReference>
<dbReference type="InterPro" id="IPR017443">
    <property type="entry name" value="RuBisCO_lsu_fd_N"/>
</dbReference>
<dbReference type="InterPro" id="IPR036422">
    <property type="entry name" value="RuBisCO_lsu_N_sf"/>
</dbReference>
<dbReference type="PANTHER" id="PTHR42704">
    <property type="entry name" value="RIBULOSE BISPHOSPHATE CARBOXYLASE"/>
    <property type="match status" value="1"/>
</dbReference>
<dbReference type="PANTHER" id="PTHR42704:SF15">
    <property type="entry name" value="RIBULOSE BISPHOSPHATE CARBOXYLASE LARGE CHAIN"/>
    <property type="match status" value="1"/>
</dbReference>
<dbReference type="Pfam" id="PF02788">
    <property type="entry name" value="RuBisCO_large_N"/>
    <property type="match status" value="1"/>
</dbReference>
<dbReference type="SUPFAM" id="SSF54966">
    <property type="entry name" value="RuBisCO, large subunit, small (N-terminal) domain"/>
    <property type="match status" value="1"/>
</dbReference>
<accession>P31203</accession>
<organism>
    <name type="scientific">Weinmannia silvicola</name>
    <name type="common">Towai</name>
    <dbReference type="NCBI Taxonomy" id="3780"/>
    <lineage>
        <taxon>Eukaryota</taxon>
        <taxon>Viridiplantae</taxon>
        <taxon>Streptophyta</taxon>
        <taxon>Embryophyta</taxon>
        <taxon>Tracheophyta</taxon>
        <taxon>Spermatophyta</taxon>
        <taxon>Magnoliopsida</taxon>
        <taxon>eudicotyledons</taxon>
        <taxon>Gunneridae</taxon>
        <taxon>Pentapetalae</taxon>
        <taxon>rosids</taxon>
        <taxon>fabids</taxon>
        <taxon>Oxalidales</taxon>
        <taxon>Cunoniaceae</taxon>
        <taxon>Weinmannia</taxon>
    </lineage>
</organism>